<name>RS11_RIPO1</name>
<keyword id="KW-1185">Reference proteome</keyword>
<keyword id="KW-0687">Ribonucleoprotein</keyword>
<keyword id="KW-0689">Ribosomal protein</keyword>
<keyword id="KW-0694">RNA-binding</keyword>
<keyword id="KW-0699">rRNA-binding</keyword>
<proteinExistence type="inferred from homology"/>
<gene>
    <name evidence="1" type="primary">rpsK</name>
    <name evidence="1" type="synonym">rps11</name>
    <name type="ordered locus">PCC8801_0229</name>
</gene>
<sequence length="130" mass="13702">MARPTKKTGTKKQKKNVPNGIAHIQSTFNNTIVTIADTKGDVVSWASAGSSGFKGAKKGTPFAAQTAADAAARRAIDQGMRQIEVMVSGPGAGRETAIRALQGAGLEITLIRDVTPIPHNGCRPPKRRRV</sequence>
<protein>
    <recommendedName>
        <fullName evidence="1">Small ribosomal subunit protein uS11</fullName>
    </recommendedName>
    <alternativeName>
        <fullName evidence="2">30S ribosomal protein S11</fullName>
    </alternativeName>
</protein>
<feature type="chain" id="PRO_1000141080" description="Small ribosomal subunit protein uS11">
    <location>
        <begin position="1"/>
        <end position="130"/>
    </location>
</feature>
<dbReference type="EMBL" id="CP001287">
    <property type="protein sequence ID" value="ACK64332.1"/>
    <property type="molecule type" value="Genomic_DNA"/>
</dbReference>
<dbReference type="RefSeq" id="WP_012593609.1">
    <property type="nucleotide sequence ID" value="NC_011726.1"/>
</dbReference>
<dbReference type="SMR" id="B7K225"/>
<dbReference type="STRING" id="41431.PCC8801_0229"/>
<dbReference type="KEGG" id="cyp:PCC8801_0229"/>
<dbReference type="eggNOG" id="COG0100">
    <property type="taxonomic scope" value="Bacteria"/>
</dbReference>
<dbReference type="HOGENOM" id="CLU_072439_5_0_3"/>
<dbReference type="OrthoDB" id="9806415at2"/>
<dbReference type="Proteomes" id="UP000008204">
    <property type="component" value="Chromosome"/>
</dbReference>
<dbReference type="GO" id="GO:1990904">
    <property type="term" value="C:ribonucleoprotein complex"/>
    <property type="evidence" value="ECO:0007669"/>
    <property type="project" value="UniProtKB-KW"/>
</dbReference>
<dbReference type="GO" id="GO:0005840">
    <property type="term" value="C:ribosome"/>
    <property type="evidence" value="ECO:0007669"/>
    <property type="project" value="UniProtKB-KW"/>
</dbReference>
<dbReference type="GO" id="GO:0019843">
    <property type="term" value="F:rRNA binding"/>
    <property type="evidence" value="ECO:0007669"/>
    <property type="project" value="UniProtKB-UniRule"/>
</dbReference>
<dbReference type="GO" id="GO:0003735">
    <property type="term" value="F:structural constituent of ribosome"/>
    <property type="evidence" value="ECO:0007669"/>
    <property type="project" value="InterPro"/>
</dbReference>
<dbReference type="GO" id="GO:0006412">
    <property type="term" value="P:translation"/>
    <property type="evidence" value="ECO:0007669"/>
    <property type="project" value="UniProtKB-UniRule"/>
</dbReference>
<dbReference type="FunFam" id="3.30.420.80:FF:000001">
    <property type="entry name" value="30S ribosomal protein S11"/>
    <property type="match status" value="1"/>
</dbReference>
<dbReference type="Gene3D" id="3.30.420.80">
    <property type="entry name" value="Ribosomal protein S11"/>
    <property type="match status" value="1"/>
</dbReference>
<dbReference type="HAMAP" id="MF_01310">
    <property type="entry name" value="Ribosomal_uS11"/>
    <property type="match status" value="1"/>
</dbReference>
<dbReference type="InterPro" id="IPR001971">
    <property type="entry name" value="Ribosomal_uS11"/>
</dbReference>
<dbReference type="InterPro" id="IPR019981">
    <property type="entry name" value="Ribosomal_uS11_bac-type"/>
</dbReference>
<dbReference type="InterPro" id="IPR018102">
    <property type="entry name" value="Ribosomal_uS11_CS"/>
</dbReference>
<dbReference type="InterPro" id="IPR036967">
    <property type="entry name" value="Ribosomal_uS11_sf"/>
</dbReference>
<dbReference type="NCBIfam" id="NF003698">
    <property type="entry name" value="PRK05309.1"/>
    <property type="match status" value="1"/>
</dbReference>
<dbReference type="NCBIfam" id="TIGR03632">
    <property type="entry name" value="uS11_bact"/>
    <property type="match status" value="1"/>
</dbReference>
<dbReference type="PANTHER" id="PTHR11759">
    <property type="entry name" value="40S RIBOSOMAL PROTEIN S14/30S RIBOSOMAL PROTEIN S11"/>
    <property type="match status" value="1"/>
</dbReference>
<dbReference type="Pfam" id="PF00411">
    <property type="entry name" value="Ribosomal_S11"/>
    <property type="match status" value="1"/>
</dbReference>
<dbReference type="PIRSF" id="PIRSF002131">
    <property type="entry name" value="Ribosomal_S11"/>
    <property type="match status" value="1"/>
</dbReference>
<dbReference type="SUPFAM" id="SSF53137">
    <property type="entry name" value="Translational machinery components"/>
    <property type="match status" value="1"/>
</dbReference>
<dbReference type="PROSITE" id="PS00054">
    <property type="entry name" value="RIBOSOMAL_S11"/>
    <property type="match status" value="1"/>
</dbReference>
<organism>
    <name type="scientific">Rippkaea orientalis (strain PCC 8801 / RF-1)</name>
    <name type="common">Cyanothece sp. (strain PCC 8801)</name>
    <dbReference type="NCBI Taxonomy" id="41431"/>
    <lineage>
        <taxon>Bacteria</taxon>
        <taxon>Bacillati</taxon>
        <taxon>Cyanobacteriota</taxon>
        <taxon>Cyanophyceae</taxon>
        <taxon>Oscillatoriophycideae</taxon>
        <taxon>Chroococcales</taxon>
        <taxon>Aphanothecaceae</taxon>
        <taxon>Rippkaea</taxon>
        <taxon>Rippkaea orientalis</taxon>
    </lineage>
</organism>
<evidence type="ECO:0000255" key="1">
    <source>
        <dbReference type="HAMAP-Rule" id="MF_01310"/>
    </source>
</evidence>
<evidence type="ECO:0000305" key="2"/>
<comment type="function">
    <text evidence="1">Located on the platform of the 30S subunit, it bridges several disparate RNA helices of the 16S rRNA. Forms part of the Shine-Dalgarno cleft in the 70S ribosome.</text>
</comment>
<comment type="subunit">
    <text evidence="1">Part of the 30S ribosomal subunit. Interacts with proteins S7 and S18. Binds to IF-3.</text>
</comment>
<comment type="similarity">
    <text evidence="1">Belongs to the universal ribosomal protein uS11 family.</text>
</comment>
<reference key="1">
    <citation type="journal article" date="2011" name="MBio">
        <title>Novel metabolic attributes of the genus Cyanothece, comprising a group of unicellular nitrogen-fixing Cyanobacteria.</title>
        <authorList>
            <person name="Bandyopadhyay A."/>
            <person name="Elvitigala T."/>
            <person name="Welsh E."/>
            <person name="Stockel J."/>
            <person name="Liberton M."/>
            <person name="Min H."/>
            <person name="Sherman L.A."/>
            <person name="Pakrasi H.B."/>
        </authorList>
    </citation>
    <scope>NUCLEOTIDE SEQUENCE [LARGE SCALE GENOMIC DNA]</scope>
    <source>
        <strain>PCC 8801 / RF-1</strain>
    </source>
</reference>
<accession>B7K225</accession>